<keyword id="KW-0963">Cytoplasm</keyword>
<keyword id="KW-0255">Endonuclease</keyword>
<keyword id="KW-0378">Hydrolase</keyword>
<keyword id="KW-0464">Manganese</keyword>
<keyword id="KW-0479">Metal-binding</keyword>
<keyword id="KW-0540">Nuclease</keyword>
<sequence length="257" mass="28995">MQKVTIQEAEHLLQEIMSEEDDRFQILIKDERKGVQKLISKWYKQKELAQKEKEKFLEMSKYENALREKGLTYIAGIDEVGRGPLAGPVVTAAVILPEDFYIPGLNDSKKLSEAKRERFYDEIKAQAIAIGVGIVSPQVIDEINIYQATKQAMLDAVANLSCTPEYLLIDAMKLPTPIPQTSIIKGDAKSISISAASIIAKVTRDRMMKELGEKYPAYGFEQHMGYGTKQHLEAIEVHGVLEEHRKSFAPIKDMIQK</sequence>
<name>RNH2_BACCZ</name>
<proteinExistence type="inferred from homology"/>
<protein>
    <recommendedName>
        <fullName evidence="1">Ribonuclease HII</fullName>
        <shortName evidence="1">RNase HII</shortName>
        <ecNumber evidence="1">3.1.26.4</ecNumber>
    </recommendedName>
</protein>
<evidence type="ECO:0000255" key="1">
    <source>
        <dbReference type="HAMAP-Rule" id="MF_00052"/>
    </source>
</evidence>
<evidence type="ECO:0000255" key="2">
    <source>
        <dbReference type="PROSITE-ProRule" id="PRU01319"/>
    </source>
</evidence>
<accession>Q636I9</accession>
<feature type="chain" id="PRO_0000235696" description="Ribonuclease HII">
    <location>
        <begin position="1"/>
        <end position="257"/>
    </location>
</feature>
<feature type="domain" description="RNase H type-2" evidence="2">
    <location>
        <begin position="72"/>
        <end position="257"/>
    </location>
</feature>
<feature type="binding site" evidence="1">
    <location>
        <position position="78"/>
    </location>
    <ligand>
        <name>a divalent metal cation</name>
        <dbReference type="ChEBI" id="CHEBI:60240"/>
    </ligand>
</feature>
<feature type="binding site" evidence="1">
    <location>
        <position position="79"/>
    </location>
    <ligand>
        <name>a divalent metal cation</name>
        <dbReference type="ChEBI" id="CHEBI:60240"/>
    </ligand>
</feature>
<feature type="binding site" evidence="1">
    <location>
        <position position="170"/>
    </location>
    <ligand>
        <name>a divalent metal cation</name>
        <dbReference type="ChEBI" id="CHEBI:60240"/>
    </ligand>
</feature>
<dbReference type="EC" id="3.1.26.4" evidence="1"/>
<dbReference type="EMBL" id="CP000001">
    <property type="protein sequence ID" value="AAU16670.1"/>
    <property type="molecule type" value="Genomic_DNA"/>
</dbReference>
<dbReference type="RefSeq" id="WP_001174723.1">
    <property type="nucleotide sequence ID" value="NC_006274.1"/>
</dbReference>
<dbReference type="SMR" id="Q636I9"/>
<dbReference type="KEGG" id="bcz:BCE33L3596"/>
<dbReference type="PATRIC" id="fig|288681.22.peg.1815"/>
<dbReference type="Proteomes" id="UP000002612">
    <property type="component" value="Chromosome"/>
</dbReference>
<dbReference type="GO" id="GO:0005737">
    <property type="term" value="C:cytoplasm"/>
    <property type="evidence" value="ECO:0007669"/>
    <property type="project" value="UniProtKB-SubCell"/>
</dbReference>
<dbReference type="GO" id="GO:0032299">
    <property type="term" value="C:ribonuclease H2 complex"/>
    <property type="evidence" value="ECO:0007669"/>
    <property type="project" value="TreeGrafter"/>
</dbReference>
<dbReference type="GO" id="GO:0030145">
    <property type="term" value="F:manganese ion binding"/>
    <property type="evidence" value="ECO:0007669"/>
    <property type="project" value="UniProtKB-UniRule"/>
</dbReference>
<dbReference type="GO" id="GO:0003723">
    <property type="term" value="F:RNA binding"/>
    <property type="evidence" value="ECO:0007669"/>
    <property type="project" value="InterPro"/>
</dbReference>
<dbReference type="GO" id="GO:0004523">
    <property type="term" value="F:RNA-DNA hybrid ribonuclease activity"/>
    <property type="evidence" value="ECO:0007669"/>
    <property type="project" value="UniProtKB-UniRule"/>
</dbReference>
<dbReference type="GO" id="GO:0043137">
    <property type="term" value="P:DNA replication, removal of RNA primer"/>
    <property type="evidence" value="ECO:0007669"/>
    <property type="project" value="TreeGrafter"/>
</dbReference>
<dbReference type="GO" id="GO:0006298">
    <property type="term" value="P:mismatch repair"/>
    <property type="evidence" value="ECO:0007669"/>
    <property type="project" value="TreeGrafter"/>
</dbReference>
<dbReference type="CDD" id="cd07182">
    <property type="entry name" value="RNase_HII_bacteria_HII_like"/>
    <property type="match status" value="1"/>
</dbReference>
<dbReference type="FunFam" id="3.30.420.10:FF:000006">
    <property type="entry name" value="Ribonuclease HII"/>
    <property type="match status" value="1"/>
</dbReference>
<dbReference type="Gene3D" id="3.30.420.10">
    <property type="entry name" value="Ribonuclease H-like superfamily/Ribonuclease H"/>
    <property type="match status" value="1"/>
</dbReference>
<dbReference type="HAMAP" id="MF_00052_B">
    <property type="entry name" value="RNase_HII_B"/>
    <property type="match status" value="1"/>
</dbReference>
<dbReference type="InterPro" id="IPR022898">
    <property type="entry name" value="RNase_HII"/>
</dbReference>
<dbReference type="InterPro" id="IPR001352">
    <property type="entry name" value="RNase_HII/HIII"/>
</dbReference>
<dbReference type="InterPro" id="IPR024567">
    <property type="entry name" value="RNase_HII/HIII_dom"/>
</dbReference>
<dbReference type="InterPro" id="IPR012337">
    <property type="entry name" value="RNaseH-like_sf"/>
</dbReference>
<dbReference type="InterPro" id="IPR036397">
    <property type="entry name" value="RNaseH_sf"/>
</dbReference>
<dbReference type="NCBIfam" id="NF000594">
    <property type="entry name" value="PRK00015.1-1"/>
    <property type="match status" value="1"/>
</dbReference>
<dbReference type="NCBIfam" id="NF000595">
    <property type="entry name" value="PRK00015.1-3"/>
    <property type="match status" value="1"/>
</dbReference>
<dbReference type="PANTHER" id="PTHR10954">
    <property type="entry name" value="RIBONUCLEASE H2 SUBUNIT A"/>
    <property type="match status" value="1"/>
</dbReference>
<dbReference type="PANTHER" id="PTHR10954:SF18">
    <property type="entry name" value="RIBONUCLEASE HII"/>
    <property type="match status" value="1"/>
</dbReference>
<dbReference type="Pfam" id="PF01351">
    <property type="entry name" value="RNase_HII"/>
    <property type="match status" value="1"/>
</dbReference>
<dbReference type="SUPFAM" id="SSF53098">
    <property type="entry name" value="Ribonuclease H-like"/>
    <property type="match status" value="1"/>
</dbReference>
<dbReference type="PROSITE" id="PS51975">
    <property type="entry name" value="RNASE_H_2"/>
    <property type="match status" value="1"/>
</dbReference>
<comment type="function">
    <text evidence="1">Endonuclease that specifically degrades the RNA of RNA-DNA hybrids.</text>
</comment>
<comment type="catalytic activity">
    <reaction evidence="1">
        <text>Endonucleolytic cleavage to 5'-phosphomonoester.</text>
        <dbReference type="EC" id="3.1.26.4"/>
    </reaction>
</comment>
<comment type="cofactor">
    <cofactor evidence="1">
        <name>Mn(2+)</name>
        <dbReference type="ChEBI" id="CHEBI:29035"/>
    </cofactor>
    <cofactor evidence="1">
        <name>Mg(2+)</name>
        <dbReference type="ChEBI" id="CHEBI:18420"/>
    </cofactor>
    <text evidence="1">Manganese or magnesium. Binds 1 divalent metal ion per monomer in the absence of substrate. May bind a second metal ion after substrate binding.</text>
</comment>
<comment type="subcellular location">
    <subcellularLocation>
        <location evidence="1">Cytoplasm</location>
    </subcellularLocation>
</comment>
<comment type="similarity">
    <text evidence="1">Belongs to the RNase HII family.</text>
</comment>
<gene>
    <name evidence="1" type="primary">rnhB</name>
    <name type="ordered locus">BCE33L3596</name>
</gene>
<reference key="1">
    <citation type="journal article" date="2006" name="J. Bacteriol.">
        <title>Pathogenomic sequence analysis of Bacillus cereus and Bacillus thuringiensis isolates closely related to Bacillus anthracis.</title>
        <authorList>
            <person name="Han C.S."/>
            <person name="Xie G."/>
            <person name="Challacombe J.F."/>
            <person name="Altherr M.R."/>
            <person name="Bhotika S.S."/>
            <person name="Bruce D."/>
            <person name="Campbell C.S."/>
            <person name="Campbell M.L."/>
            <person name="Chen J."/>
            <person name="Chertkov O."/>
            <person name="Cleland C."/>
            <person name="Dimitrijevic M."/>
            <person name="Doggett N.A."/>
            <person name="Fawcett J.J."/>
            <person name="Glavina T."/>
            <person name="Goodwin L.A."/>
            <person name="Hill K.K."/>
            <person name="Hitchcock P."/>
            <person name="Jackson P.J."/>
            <person name="Keim P."/>
            <person name="Kewalramani A.R."/>
            <person name="Longmire J."/>
            <person name="Lucas S."/>
            <person name="Malfatti S."/>
            <person name="McMurry K."/>
            <person name="Meincke L.J."/>
            <person name="Misra M."/>
            <person name="Moseman B.L."/>
            <person name="Mundt M."/>
            <person name="Munk A.C."/>
            <person name="Okinaka R.T."/>
            <person name="Parson-Quintana B."/>
            <person name="Reilly L.P."/>
            <person name="Richardson P."/>
            <person name="Robinson D.L."/>
            <person name="Rubin E."/>
            <person name="Saunders E."/>
            <person name="Tapia R."/>
            <person name="Tesmer J.G."/>
            <person name="Thayer N."/>
            <person name="Thompson L.S."/>
            <person name="Tice H."/>
            <person name="Ticknor L.O."/>
            <person name="Wills P.L."/>
            <person name="Brettin T.S."/>
            <person name="Gilna P."/>
        </authorList>
    </citation>
    <scope>NUCLEOTIDE SEQUENCE [LARGE SCALE GENOMIC DNA]</scope>
    <source>
        <strain>ZK / E33L</strain>
    </source>
</reference>
<organism>
    <name type="scientific">Bacillus cereus (strain ZK / E33L)</name>
    <dbReference type="NCBI Taxonomy" id="288681"/>
    <lineage>
        <taxon>Bacteria</taxon>
        <taxon>Bacillati</taxon>
        <taxon>Bacillota</taxon>
        <taxon>Bacilli</taxon>
        <taxon>Bacillales</taxon>
        <taxon>Bacillaceae</taxon>
        <taxon>Bacillus</taxon>
        <taxon>Bacillus cereus group</taxon>
    </lineage>
</organism>